<dbReference type="EC" id="2.1.1.189" evidence="1"/>
<dbReference type="EMBL" id="AP009240">
    <property type="protein sequence ID" value="BAG76441.1"/>
    <property type="molecule type" value="Genomic_DNA"/>
</dbReference>
<dbReference type="RefSeq" id="WP_001149734.1">
    <property type="nucleotide sequence ID" value="NC_011415.1"/>
</dbReference>
<dbReference type="SMR" id="B6I8H9"/>
<dbReference type="KEGG" id="ecy:ECSE_0917"/>
<dbReference type="HOGENOM" id="CLU_014689_0_0_6"/>
<dbReference type="Proteomes" id="UP000008199">
    <property type="component" value="Chromosome"/>
</dbReference>
<dbReference type="GO" id="GO:0051539">
    <property type="term" value="F:4 iron, 4 sulfur cluster binding"/>
    <property type="evidence" value="ECO:0007669"/>
    <property type="project" value="UniProtKB-KW"/>
</dbReference>
<dbReference type="GO" id="GO:0005506">
    <property type="term" value="F:iron ion binding"/>
    <property type="evidence" value="ECO:0007669"/>
    <property type="project" value="UniProtKB-UniRule"/>
</dbReference>
<dbReference type="GO" id="GO:0070041">
    <property type="term" value="F:rRNA (uridine-C5-)-methyltransferase activity"/>
    <property type="evidence" value="ECO:0007669"/>
    <property type="project" value="UniProtKB-UniRule"/>
</dbReference>
<dbReference type="GO" id="GO:0070475">
    <property type="term" value="P:rRNA base methylation"/>
    <property type="evidence" value="ECO:0007669"/>
    <property type="project" value="TreeGrafter"/>
</dbReference>
<dbReference type="CDD" id="cd02440">
    <property type="entry name" value="AdoMet_MTases"/>
    <property type="match status" value="1"/>
</dbReference>
<dbReference type="FunFam" id="2.40.50.1070:FF:000002">
    <property type="entry name" value="23S rRNA (uracil(747)-C(5))-methyltransferase RlmC"/>
    <property type="match status" value="1"/>
</dbReference>
<dbReference type="FunFam" id="3.40.50.150:FF:000049">
    <property type="entry name" value="23S rRNA (uracil(747)-C(5))-methyltransferase RlmC"/>
    <property type="match status" value="1"/>
</dbReference>
<dbReference type="Gene3D" id="2.40.50.1070">
    <property type="match status" value="1"/>
</dbReference>
<dbReference type="Gene3D" id="3.40.50.150">
    <property type="entry name" value="Vaccinia Virus protein VP39"/>
    <property type="match status" value="1"/>
</dbReference>
<dbReference type="HAMAP" id="MF_01012">
    <property type="entry name" value="23SrRNA_methyltr_RlmC"/>
    <property type="match status" value="1"/>
</dbReference>
<dbReference type="InterPro" id="IPR011825">
    <property type="entry name" value="23SrRNA_MeTrfase_RlmC"/>
</dbReference>
<dbReference type="InterPro" id="IPR030390">
    <property type="entry name" value="MeTrfase_TrmA_AS"/>
</dbReference>
<dbReference type="InterPro" id="IPR030391">
    <property type="entry name" value="MeTrfase_TrmA_CS"/>
</dbReference>
<dbReference type="InterPro" id="IPR029063">
    <property type="entry name" value="SAM-dependent_MTases_sf"/>
</dbReference>
<dbReference type="InterPro" id="IPR010280">
    <property type="entry name" value="U5_MeTrfase_fam"/>
</dbReference>
<dbReference type="NCBIfam" id="TIGR02085">
    <property type="entry name" value="meth_trns_rumB"/>
    <property type="match status" value="1"/>
</dbReference>
<dbReference type="PANTHER" id="PTHR11061">
    <property type="entry name" value="RNA M5U METHYLTRANSFERASE"/>
    <property type="match status" value="1"/>
</dbReference>
<dbReference type="PANTHER" id="PTHR11061:SF30">
    <property type="entry name" value="TRNA (URACIL(54)-C(5))-METHYLTRANSFERASE"/>
    <property type="match status" value="1"/>
</dbReference>
<dbReference type="Pfam" id="PF05958">
    <property type="entry name" value="tRNA_U5-meth_tr"/>
    <property type="match status" value="1"/>
</dbReference>
<dbReference type="SUPFAM" id="SSF53335">
    <property type="entry name" value="S-adenosyl-L-methionine-dependent methyltransferases"/>
    <property type="match status" value="1"/>
</dbReference>
<dbReference type="PROSITE" id="PS51687">
    <property type="entry name" value="SAM_MT_RNA_M5U"/>
    <property type="match status" value="1"/>
</dbReference>
<dbReference type="PROSITE" id="PS01230">
    <property type="entry name" value="TRMA_1"/>
    <property type="match status" value="1"/>
</dbReference>
<dbReference type="PROSITE" id="PS01231">
    <property type="entry name" value="TRMA_2"/>
    <property type="match status" value="1"/>
</dbReference>
<reference key="1">
    <citation type="journal article" date="2008" name="DNA Res.">
        <title>Complete genome sequence and comparative analysis of the wild-type commensal Escherichia coli strain SE11 isolated from a healthy adult.</title>
        <authorList>
            <person name="Oshima K."/>
            <person name="Toh H."/>
            <person name="Ogura Y."/>
            <person name="Sasamoto H."/>
            <person name="Morita H."/>
            <person name="Park S.-H."/>
            <person name="Ooka T."/>
            <person name="Iyoda S."/>
            <person name="Taylor T.D."/>
            <person name="Hayashi T."/>
            <person name="Itoh K."/>
            <person name="Hattori M."/>
        </authorList>
    </citation>
    <scope>NUCLEOTIDE SEQUENCE [LARGE SCALE GENOMIC DNA]</scope>
    <source>
        <strain>SE11</strain>
    </source>
</reference>
<evidence type="ECO:0000255" key="1">
    <source>
        <dbReference type="HAMAP-Rule" id="MF_01012"/>
    </source>
</evidence>
<proteinExistence type="inferred from homology"/>
<comment type="function">
    <text evidence="1">Catalyzes the formation of 5-methyl-uridine at position 747 (m5U747) in 23S rRNA.</text>
</comment>
<comment type="catalytic activity">
    <reaction evidence="1">
        <text>uridine(747) in 23S rRNA + S-adenosyl-L-methionine = 5-methyluridine(747) in 23S rRNA + S-adenosyl-L-homocysteine + H(+)</text>
        <dbReference type="Rhea" id="RHEA:42628"/>
        <dbReference type="Rhea" id="RHEA-COMP:10154"/>
        <dbReference type="Rhea" id="RHEA-COMP:10155"/>
        <dbReference type="ChEBI" id="CHEBI:15378"/>
        <dbReference type="ChEBI" id="CHEBI:57856"/>
        <dbReference type="ChEBI" id="CHEBI:59789"/>
        <dbReference type="ChEBI" id="CHEBI:65315"/>
        <dbReference type="ChEBI" id="CHEBI:74447"/>
        <dbReference type="EC" id="2.1.1.189"/>
    </reaction>
</comment>
<comment type="similarity">
    <text evidence="1">Belongs to the class I-like SAM-binding methyltransferase superfamily. RNA M5U methyltransferase family. RlmC subfamily.</text>
</comment>
<feature type="chain" id="PRO_1000200864" description="23S rRNA (uracil(747)-C(5))-methyltransferase RlmC">
    <location>
        <begin position="1"/>
        <end position="375"/>
    </location>
</feature>
<feature type="active site" description="Nucleophile" evidence="1">
    <location>
        <position position="334"/>
    </location>
</feature>
<feature type="binding site" evidence="1">
    <location>
        <position position="3"/>
    </location>
    <ligand>
        <name>[4Fe-4S] cluster</name>
        <dbReference type="ChEBI" id="CHEBI:49883"/>
    </ligand>
</feature>
<feature type="binding site" evidence="1">
    <location>
        <position position="11"/>
    </location>
    <ligand>
        <name>[4Fe-4S] cluster</name>
        <dbReference type="ChEBI" id="CHEBI:49883"/>
    </ligand>
</feature>
<feature type="binding site" evidence="1">
    <location>
        <position position="14"/>
    </location>
    <ligand>
        <name>[4Fe-4S] cluster</name>
        <dbReference type="ChEBI" id="CHEBI:49883"/>
    </ligand>
</feature>
<feature type="binding site" evidence="1">
    <location>
        <position position="87"/>
    </location>
    <ligand>
        <name>[4Fe-4S] cluster</name>
        <dbReference type="ChEBI" id="CHEBI:49883"/>
    </ligand>
</feature>
<feature type="binding site" evidence="1">
    <location>
        <position position="212"/>
    </location>
    <ligand>
        <name>S-adenosyl-L-methionine</name>
        <dbReference type="ChEBI" id="CHEBI:59789"/>
    </ligand>
</feature>
<feature type="binding site" evidence="1">
    <location>
        <position position="241"/>
    </location>
    <ligand>
        <name>S-adenosyl-L-methionine</name>
        <dbReference type="ChEBI" id="CHEBI:59789"/>
    </ligand>
</feature>
<feature type="binding site" evidence="1">
    <location>
        <position position="262"/>
    </location>
    <ligand>
        <name>S-adenosyl-L-methionine</name>
        <dbReference type="ChEBI" id="CHEBI:59789"/>
    </ligand>
</feature>
<feature type="binding site" evidence="1">
    <location>
        <position position="307"/>
    </location>
    <ligand>
        <name>S-adenosyl-L-methionine</name>
        <dbReference type="ChEBI" id="CHEBI:59789"/>
    </ligand>
</feature>
<organism>
    <name type="scientific">Escherichia coli (strain SE11)</name>
    <dbReference type="NCBI Taxonomy" id="409438"/>
    <lineage>
        <taxon>Bacteria</taxon>
        <taxon>Pseudomonadati</taxon>
        <taxon>Pseudomonadota</taxon>
        <taxon>Gammaproteobacteria</taxon>
        <taxon>Enterobacterales</taxon>
        <taxon>Enterobacteriaceae</taxon>
        <taxon>Escherichia</taxon>
    </lineage>
</organism>
<name>RLMC_ECOSE</name>
<accession>B6I8H9</accession>
<sequence length="375" mass="41947">MQCALYDAGRCRSCQWITQPIPEQLSAKTADLKNLLADFPVEEWCAPVSGPEQGFRNKAKMVVSGSVEKPLLGMLHRDGTPEDLCDCPLYPASFAPVFAALKPFIARAGLTPYNVARKRGELKYILLTESQSDGGMMLRFVLRSETKLAQLRKALPWLQEQLPQLKVITVNIQPVHMAIMEGETEIYLTEQQALAERFNDVPLWIRPQSFFQTNPAVASQLYATARDWVRQLPVKHMWDLFCGVGGFGLHCATPDMQLTGIEIASEAIACAKQSAAELGLTRLQFQALDSTQFATAQGEVPELVLVNPPRRGIGKPLCDYLSTMAPRFIIYSSCNAQTMAKDVRELPGYRIERVQLFDMFPHTAHYEVLTLLVKQ</sequence>
<gene>
    <name evidence="1" type="primary">rlmC</name>
    <name type="synonym">rumB</name>
    <name type="ordered locus">ECSE_0917</name>
</gene>
<protein>
    <recommendedName>
        <fullName evidence="1">23S rRNA (uracil(747)-C(5))-methyltransferase RlmC</fullName>
        <ecNumber evidence="1">2.1.1.189</ecNumber>
    </recommendedName>
    <alternativeName>
        <fullName evidence="1">23S rRNA(m5U747)-methyltransferase</fullName>
    </alternativeName>
</protein>
<keyword id="KW-0004">4Fe-4S</keyword>
<keyword id="KW-0408">Iron</keyword>
<keyword id="KW-0411">Iron-sulfur</keyword>
<keyword id="KW-0479">Metal-binding</keyword>
<keyword id="KW-0489">Methyltransferase</keyword>
<keyword id="KW-0698">rRNA processing</keyword>
<keyword id="KW-0949">S-adenosyl-L-methionine</keyword>
<keyword id="KW-0808">Transferase</keyword>